<dbReference type="EMBL" id="X66059">
    <property type="protein sequence ID" value="CAA46855.1"/>
    <property type="molecule type" value="Genomic_DNA"/>
</dbReference>
<dbReference type="PIR" id="S50185">
    <property type="entry name" value="S50185"/>
</dbReference>
<dbReference type="PDB" id="2W48">
    <property type="method" value="X-ray"/>
    <property type="resolution" value="3.20 A"/>
    <property type="chains" value="A/B/C/D=1-315"/>
</dbReference>
<dbReference type="PDBsum" id="2W48"/>
<dbReference type="SMR" id="P37078"/>
<dbReference type="EvolutionaryTrace" id="P37078"/>
<dbReference type="GO" id="GO:0030246">
    <property type="term" value="F:carbohydrate binding"/>
    <property type="evidence" value="ECO:0007669"/>
    <property type="project" value="InterPro"/>
</dbReference>
<dbReference type="GO" id="GO:0003677">
    <property type="term" value="F:DNA binding"/>
    <property type="evidence" value="ECO:0007669"/>
    <property type="project" value="UniProtKB-KW"/>
</dbReference>
<dbReference type="GO" id="GO:0003700">
    <property type="term" value="F:DNA-binding transcription factor activity"/>
    <property type="evidence" value="ECO:0007669"/>
    <property type="project" value="InterPro"/>
</dbReference>
<dbReference type="GO" id="GO:0006352">
    <property type="term" value="P:DNA-templated transcription initiation"/>
    <property type="evidence" value="ECO:0007669"/>
    <property type="project" value="InterPro"/>
</dbReference>
<dbReference type="CDD" id="cd00090">
    <property type="entry name" value="HTH_ARSR"/>
    <property type="match status" value="1"/>
</dbReference>
<dbReference type="Gene3D" id="3.40.50.1360">
    <property type="match status" value="1"/>
</dbReference>
<dbReference type="Gene3D" id="1.10.10.60">
    <property type="entry name" value="Homeodomain-like"/>
    <property type="match status" value="1"/>
</dbReference>
<dbReference type="InterPro" id="IPR011991">
    <property type="entry name" value="ArsR-like_HTH"/>
</dbReference>
<dbReference type="InterPro" id="IPR009057">
    <property type="entry name" value="Homeodomain-like_sf"/>
</dbReference>
<dbReference type="InterPro" id="IPR037171">
    <property type="entry name" value="NagB/RpiA_transferase-like"/>
</dbReference>
<dbReference type="InterPro" id="IPR007630">
    <property type="entry name" value="RNA_pol_sigma70_r4"/>
</dbReference>
<dbReference type="InterPro" id="IPR051054">
    <property type="entry name" value="SorC_transcr_regulators"/>
</dbReference>
<dbReference type="InterPro" id="IPR007324">
    <property type="entry name" value="Sugar-bd_dom_put"/>
</dbReference>
<dbReference type="PANTHER" id="PTHR34294:SF1">
    <property type="entry name" value="TRANSCRIPTIONAL REGULATOR LSRR"/>
    <property type="match status" value="1"/>
</dbReference>
<dbReference type="PANTHER" id="PTHR34294">
    <property type="entry name" value="TRANSCRIPTIONAL REGULATOR-RELATED"/>
    <property type="match status" value="1"/>
</dbReference>
<dbReference type="Pfam" id="PF04545">
    <property type="entry name" value="Sigma70_r4"/>
    <property type="match status" value="1"/>
</dbReference>
<dbReference type="Pfam" id="PF04198">
    <property type="entry name" value="Sugar-bind"/>
    <property type="match status" value="1"/>
</dbReference>
<dbReference type="SUPFAM" id="SSF46689">
    <property type="entry name" value="Homeodomain-like"/>
    <property type="match status" value="1"/>
</dbReference>
<dbReference type="SUPFAM" id="SSF100950">
    <property type="entry name" value="NagB/RpiA/CoA transferase-like"/>
    <property type="match status" value="1"/>
</dbReference>
<gene>
    <name type="primary">sorC</name>
</gene>
<reference key="1">
    <citation type="journal article" date="1994" name="Biochim. Biophys. Acta">
        <title>Sequence of the sor-operon for L-sorbose utilization from Klebsiella pneumoniae KAY2026.</title>
        <authorList>
            <person name="Wehmeier U.F."/>
            <person name="Lengeler J.W."/>
        </authorList>
    </citation>
    <scope>NUCLEOTIDE SEQUENCE [GENOMIC DNA]</scope>
    <source>
        <strain>1033-5P14 / KAY2026</strain>
    </source>
</reference>
<feature type="chain" id="PRO_0000062789" description="Sorbitol operon regulator">
    <location>
        <begin position="1"/>
        <end position="315"/>
    </location>
</feature>
<feature type="DNA-binding region" description="H-T-H motif" evidence="1">
    <location>
        <begin position="24"/>
        <end position="43"/>
    </location>
</feature>
<feature type="helix" evidence="3">
    <location>
        <begin position="6"/>
        <end position="18"/>
    </location>
</feature>
<feature type="helix" evidence="3">
    <location>
        <begin position="24"/>
        <end position="30"/>
    </location>
</feature>
<feature type="helix" evidence="3">
    <location>
        <begin position="35"/>
        <end position="47"/>
    </location>
</feature>
<feature type="strand" evidence="3">
    <location>
        <begin position="50"/>
        <end position="55"/>
    </location>
</feature>
<feature type="helix" evidence="3">
    <location>
        <begin position="61"/>
        <end position="73"/>
    </location>
</feature>
<feature type="strand" evidence="3">
    <location>
        <begin position="76"/>
        <end position="81"/>
    </location>
</feature>
<feature type="strand" evidence="3">
    <location>
        <begin position="84"/>
        <end position="86"/>
    </location>
</feature>
<feature type="helix" evidence="3">
    <location>
        <begin position="90"/>
        <end position="106"/>
    </location>
</feature>
<feature type="strand" evidence="3">
    <location>
        <begin position="112"/>
        <end position="115"/>
    </location>
</feature>
<feature type="helix" evidence="3">
    <location>
        <begin position="119"/>
        <end position="125"/>
    </location>
</feature>
<feature type="strand" evidence="3">
    <location>
        <begin position="138"/>
        <end position="143"/>
    </location>
</feature>
<feature type="helix" evidence="3">
    <location>
        <begin position="152"/>
        <end position="154"/>
    </location>
</feature>
<feature type="helix" evidence="3">
    <location>
        <begin position="156"/>
        <end position="166"/>
    </location>
</feature>
<feature type="strand" evidence="3">
    <location>
        <begin position="176"/>
        <end position="179"/>
    </location>
</feature>
<feature type="helix" evidence="3">
    <location>
        <begin position="183"/>
        <end position="191"/>
    </location>
</feature>
<feature type="helix" evidence="3">
    <location>
        <begin position="193"/>
        <end position="202"/>
    </location>
</feature>
<feature type="strand" evidence="3">
    <location>
        <begin position="206"/>
        <end position="210"/>
    </location>
</feature>
<feature type="strand" evidence="3">
    <location>
        <begin position="219"/>
        <end position="221"/>
    </location>
</feature>
<feature type="helix" evidence="3">
    <location>
        <begin position="223"/>
        <end position="227"/>
    </location>
</feature>
<feature type="helix" evidence="3">
    <location>
        <begin position="230"/>
        <end position="237"/>
    </location>
</feature>
<feature type="strand" evidence="3">
    <location>
        <begin position="240"/>
        <end position="244"/>
    </location>
</feature>
<feature type="strand" evidence="3">
    <location>
        <begin position="247"/>
        <end position="250"/>
    </location>
</feature>
<feature type="helix" evidence="3">
    <location>
        <begin position="261"/>
        <end position="263"/>
    </location>
</feature>
<feature type="helix" evidence="3">
    <location>
        <begin position="269"/>
        <end position="273"/>
    </location>
</feature>
<feature type="strand" evidence="3">
    <location>
        <begin position="275"/>
        <end position="281"/>
    </location>
</feature>
<feature type="helix" evidence="3">
    <location>
        <begin position="285"/>
        <end position="287"/>
    </location>
</feature>
<feature type="helix" evidence="3">
    <location>
        <begin position="288"/>
        <end position="296"/>
    </location>
</feature>
<feature type="strand" evidence="3">
    <location>
        <begin position="301"/>
        <end position="306"/>
    </location>
</feature>
<feature type="helix" evidence="3">
    <location>
        <begin position="307"/>
        <end position="314"/>
    </location>
</feature>
<protein>
    <recommendedName>
        <fullName>Sorbitol operon regulator</fullName>
    </recommendedName>
    <alternativeName>
        <fullName>Sor operon activator</fullName>
    </alternativeName>
</protein>
<name>SORC_KLEPN</name>
<evidence type="ECO:0000255" key="1"/>
<evidence type="ECO:0000305" key="2"/>
<evidence type="ECO:0007829" key="3">
    <source>
        <dbReference type="PDB" id="2W48"/>
    </source>
</evidence>
<accession>P37078</accession>
<sequence length="315" mass="35104">MENSDDIRLIVKIAQLYYEQDMTQAQIARELGIYRTTISRLLKRGREQGIVTIAINYDYNENLWLEQQLKQKFGLKEAVVASSDGLLEEEQLSAMGQHGALLVDRLLEPGDIIGFSWGRAVRSLVENLPQRSQSRQVICVPIIGGPSGKLESRYHVNTLTYGAAARLKAESHLADFPALLDNPLIRNGIMQSQHFKTISSYWDSLDVALVGIGSPAIRDGANWHAFYGSEESDDLNARHVAGDICSRFYDINGGLVDTNMSEKTLSIEMAKLRQARYSIGIAMGEEKYSGILGALHGRYINCLVTNRETAELLLK</sequence>
<organism>
    <name type="scientific">Klebsiella pneumoniae</name>
    <dbReference type="NCBI Taxonomy" id="573"/>
    <lineage>
        <taxon>Bacteria</taxon>
        <taxon>Pseudomonadati</taxon>
        <taxon>Pseudomonadota</taxon>
        <taxon>Gammaproteobacteria</taxon>
        <taxon>Enterobacterales</taxon>
        <taxon>Enterobacteriaceae</taxon>
        <taxon>Klebsiella/Raoultella group</taxon>
        <taxon>Klebsiella</taxon>
        <taxon>Klebsiella pneumoniae complex</taxon>
    </lineage>
</organism>
<comment type="function">
    <text>Positively regulates, in the presence of L-sorbose, and negatively regulates, in the absence of L-sorbose, the transcription of the sor operon.</text>
</comment>
<comment type="similarity">
    <text evidence="2">Belongs to the SorC transcriptional regulatory family.</text>
</comment>
<proteinExistence type="evidence at protein level"/>
<keyword id="KW-0002">3D-structure</keyword>
<keyword id="KW-0010">Activator</keyword>
<keyword id="KW-0238">DNA-binding</keyword>
<keyword id="KW-0678">Repressor</keyword>
<keyword id="KW-0804">Transcription</keyword>
<keyword id="KW-0805">Transcription regulation</keyword>